<protein>
    <recommendedName>
        <fullName>Protein phosphatase 1 regulatory subunit 3G</fullName>
    </recommendedName>
</protein>
<keyword id="KW-0597">Phosphoprotein</keyword>
<keyword id="KW-1185">Reference proteome</keyword>
<comment type="function">
    <text evidence="3">Glycogen-targeting subunit for protein phosphatase 1 (PP1). Involved in the regulation of hepatic glycogenesis in a manner coupled to the fasting-feeding cycle and distinct from other glycogen-targeting subunits.</text>
</comment>
<comment type="induction">
    <text evidence="3">Up-regulated during fasting and down-regulated after feeding.</text>
</comment>
<comment type="sequence caution" evidence="4">
    <conflict type="frameshift">
        <sequence resource="EMBL-CDS" id="BAB24130"/>
    </conflict>
</comment>
<accession>Q9CW07</accession>
<name>PP13G_MOUSE</name>
<gene>
    <name type="primary">Ppp1r3g</name>
</gene>
<evidence type="ECO:0000255" key="1">
    <source>
        <dbReference type="PROSITE-ProRule" id="PRU00491"/>
    </source>
</evidence>
<evidence type="ECO:0000256" key="2">
    <source>
        <dbReference type="SAM" id="MobiDB-lite"/>
    </source>
</evidence>
<evidence type="ECO:0000269" key="3">
    <source>
    </source>
</evidence>
<evidence type="ECO:0000305" key="4"/>
<evidence type="ECO:0007744" key="5">
    <source>
    </source>
</evidence>
<feature type="chain" id="PRO_0000394966" description="Protein phosphatase 1 regulatory subunit 3G">
    <location>
        <begin position="1"/>
        <end position="347"/>
    </location>
</feature>
<feature type="domain" description="CBM21" evidence="1">
    <location>
        <begin position="200"/>
        <end position="339"/>
    </location>
</feature>
<feature type="region of interest" description="Disordered" evidence="2">
    <location>
        <begin position="1"/>
        <end position="77"/>
    </location>
</feature>
<feature type="region of interest" description="Disordered" evidence="2">
    <location>
        <begin position="258"/>
        <end position="286"/>
    </location>
</feature>
<feature type="compositionally biased region" description="Polar residues" evidence="2">
    <location>
        <begin position="13"/>
        <end position="22"/>
    </location>
</feature>
<feature type="modified residue" description="Phosphoserine" evidence="5">
    <location>
        <position position="81"/>
    </location>
</feature>
<dbReference type="EMBL" id="AC134860">
    <property type="status" value="NOT_ANNOTATED_CDS"/>
    <property type="molecule type" value="Genomic_DNA"/>
</dbReference>
<dbReference type="EMBL" id="AK005570">
    <property type="protein sequence ID" value="BAB24130.1"/>
    <property type="status" value="ALT_FRAME"/>
    <property type="molecule type" value="mRNA"/>
</dbReference>
<dbReference type="CCDS" id="CCDS49237.1"/>
<dbReference type="RefSeq" id="NP_083904.1">
    <property type="nucleotide sequence ID" value="NM_029628.1"/>
</dbReference>
<dbReference type="RefSeq" id="XP_006516866.1">
    <property type="nucleotide sequence ID" value="XM_006516803.5"/>
</dbReference>
<dbReference type="RefSeq" id="XP_006516867.1">
    <property type="nucleotide sequence ID" value="XM_006516804.4"/>
</dbReference>
<dbReference type="SMR" id="Q9CW07"/>
<dbReference type="BioGRID" id="218151">
    <property type="interactions" value="1"/>
</dbReference>
<dbReference type="FunCoup" id="Q9CW07">
    <property type="interactions" value="100"/>
</dbReference>
<dbReference type="STRING" id="10090.ENSMUSP00000153702"/>
<dbReference type="iPTMnet" id="Q9CW07"/>
<dbReference type="PhosphoSitePlus" id="Q9CW07"/>
<dbReference type="PaxDb" id="10090-ENSMUSP00000122712"/>
<dbReference type="ProteomicsDB" id="289781"/>
<dbReference type="Antibodypedia" id="58036">
    <property type="antibodies" value="58 antibodies from 12 providers"/>
</dbReference>
<dbReference type="Ensembl" id="ENSMUST00000132661.2">
    <property type="protein sequence ID" value="ENSMUSP00000122712.2"/>
    <property type="gene ID" value="ENSMUSG00000050423.12"/>
</dbReference>
<dbReference type="Ensembl" id="ENSMUST00000225537.2">
    <property type="protein sequence ID" value="ENSMUSP00000153702.2"/>
    <property type="gene ID" value="ENSMUSG00000050423.12"/>
</dbReference>
<dbReference type="GeneID" id="76487"/>
<dbReference type="KEGG" id="mmu:76487"/>
<dbReference type="UCSC" id="uc007qci.2">
    <property type="organism name" value="mouse"/>
</dbReference>
<dbReference type="AGR" id="MGI:1923737"/>
<dbReference type="CTD" id="648791"/>
<dbReference type="MGI" id="MGI:1923737">
    <property type="gene designation" value="Ppp1r3g"/>
</dbReference>
<dbReference type="VEuPathDB" id="HostDB:ENSMUSG00000050423"/>
<dbReference type="eggNOG" id="KOG3986">
    <property type="taxonomic scope" value="Eukaryota"/>
</dbReference>
<dbReference type="GeneTree" id="ENSGT00940000163747"/>
<dbReference type="HOGENOM" id="CLU_040215_1_0_1"/>
<dbReference type="InParanoid" id="Q9CW07"/>
<dbReference type="OMA" id="LQSFPMR"/>
<dbReference type="OrthoDB" id="1881at2759"/>
<dbReference type="PhylomeDB" id="Q9CW07"/>
<dbReference type="TreeFam" id="TF105537"/>
<dbReference type="BioGRID-ORCS" id="76487">
    <property type="hits" value="4 hits in 78 CRISPR screens"/>
</dbReference>
<dbReference type="ChiTaRS" id="Ppp1r3g">
    <property type="organism name" value="mouse"/>
</dbReference>
<dbReference type="PRO" id="PR:Q9CW07"/>
<dbReference type="Proteomes" id="UP000000589">
    <property type="component" value="Chromosome 13"/>
</dbReference>
<dbReference type="RNAct" id="Q9CW07">
    <property type="molecule type" value="protein"/>
</dbReference>
<dbReference type="Bgee" id="ENSMUSG00000050423">
    <property type="expression patterns" value="Expressed in lumbar subsegment of spinal cord and 40 other cell types or tissues"/>
</dbReference>
<dbReference type="GO" id="GO:0005737">
    <property type="term" value="C:cytoplasm"/>
    <property type="evidence" value="ECO:0000314"/>
    <property type="project" value="MGI"/>
</dbReference>
<dbReference type="GO" id="GO:0000164">
    <property type="term" value="C:protein phosphatase type 1 complex"/>
    <property type="evidence" value="ECO:0000315"/>
    <property type="project" value="FlyBase"/>
</dbReference>
<dbReference type="GO" id="GO:2001069">
    <property type="term" value="F:glycogen binding"/>
    <property type="evidence" value="ECO:0000314"/>
    <property type="project" value="FlyBase"/>
</dbReference>
<dbReference type="GO" id="GO:0019903">
    <property type="term" value="F:protein phosphatase binding"/>
    <property type="evidence" value="ECO:0000353"/>
    <property type="project" value="MGI"/>
</dbReference>
<dbReference type="GO" id="GO:0042593">
    <property type="term" value="P:glucose homeostasis"/>
    <property type="evidence" value="ECO:0000314"/>
    <property type="project" value="MGI"/>
</dbReference>
<dbReference type="GO" id="GO:0005978">
    <property type="term" value="P:glycogen biosynthetic process"/>
    <property type="evidence" value="ECO:0000314"/>
    <property type="project" value="MGI"/>
</dbReference>
<dbReference type="GO" id="GO:0045725">
    <property type="term" value="P:positive regulation of glycogen biosynthetic process"/>
    <property type="evidence" value="ECO:0000314"/>
    <property type="project" value="MGI"/>
</dbReference>
<dbReference type="Gene3D" id="2.60.40.2440">
    <property type="entry name" value="Carbohydrate binding type-21 domain"/>
    <property type="match status" value="1"/>
</dbReference>
<dbReference type="InterPro" id="IPR005036">
    <property type="entry name" value="CBM21_dom"/>
</dbReference>
<dbReference type="InterPro" id="IPR038175">
    <property type="entry name" value="CBM21_dom_sf"/>
</dbReference>
<dbReference type="InterPro" id="IPR050782">
    <property type="entry name" value="PP1_regulatory_subunit_3"/>
</dbReference>
<dbReference type="PANTHER" id="PTHR12307">
    <property type="entry name" value="PROTEIN PHOSPHATASE 1 REGULATORY SUBUNIT"/>
    <property type="match status" value="1"/>
</dbReference>
<dbReference type="PANTHER" id="PTHR12307:SF7">
    <property type="entry name" value="PROTEIN PHOSPHATASE 1 REGULATORY SUBUNIT 3G"/>
    <property type="match status" value="1"/>
</dbReference>
<dbReference type="Pfam" id="PF03370">
    <property type="entry name" value="CBM_21"/>
    <property type="match status" value="1"/>
</dbReference>
<dbReference type="PROSITE" id="PS51159">
    <property type="entry name" value="CBM21"/>
    <property type="match status" value="1"/>
</dbReference>
<sequence length="347" mass="37823">MDPSGEQLHRSEASSSTSSGDPQSAEELSVPEVLCVESGTSETPIPDAQLQDRPLSPQKGAALPEQEELQEYRRSRARSFSLPADPILQAAKLLQQRQQAGQPSSEGGAPAGDCCSKCKKRVQFADSLGLSLASVKHFSEAEEPQVPPAVLSRLHSFPLRAEDLQQLGGLLAVATMPDPLLVPCARLRPHFQLPELRAAEERLRRQRVCLERVQCSQPPRAEVTGSGRVISCPGPRAVAVRYTFTEWRTFLDVPAELDPESVEPLPPLQSGDSGSKAEDSEEGPGTERFHFSLCLPPGLQPKEGEDAGAWGVAIHFAVCYRCEQGEYWDNNEGANYTLRYVCSTDPL</sequence>
<reference key="1">
    <citation type="journal article" date="2009" name="PLoS Biol.">
        <title>Lineage-specific biology revealed by a finished genome assembly of the mouse.</title>
        <authorList>
            <person name="Church D.M."/>
            <person name="Goodstadt L."/>
            <person name="Hillier L.W."/>
            <person name="Zody M.C."/>
            <person name="Goldstein S."/>
            <person name="She X."/>
            <person name="Bult C.J."/>
            <person name="Agarwala R."/>
            <person name="Cherry J.L."/>
            <person name="DiCuccio M."/>
            <person name="Hlavina W."/>
            <person name="Kapustin Y."/>
            <person name="Meric P."/>
            <person name="Maglott D."/>
            <person name="Birtle Z."/>
            <person name="Marques A.C."/>
            <person name="Graves T."/>
            <person name="Zhou S."/>
            <person name="Teague B."/>
            <person name="Potamousis K."/>
            <person name="Churas C."/>
            <person name="Place M."/>
            <person name="Herschleb J."/>
            <person name="Runnheim R."/>
            <person name="Forrest D."/>
            <person name="Amos-Landgraf J."/>
            <person name="Schwartz D.C."/>
            <person name="Cheng Z."/>
            <person name="Lindblad-Toh K."/>
            <person name="Eichler E.E."/>
            <person name="Ponting C.P."/>
        </authorList>
    </citation>
    <scope>NUCLEOTIDE SEQUENCE [LARGE SCALE GENOMIC DNA]</scope>
    <source>
        <strain>C57BL/6J</strain>
    </source>
</reference>
<reference key="2">
    <citation type="journal article" date="2005" name="Science">
        <title>The transcriptional landscape of the mammalian genome.</title>
        <authorList>
            <person name="Carninci P."/>
            <person name="Kasukawa T."/>
            <person name="Katayama S."/>
            <person name="Gough J."/>
            <person name="Frith M.C."/>
            <person name="Maeda N."/>
            <person name="Oyama R."/>
            <person name="Ravasi T."/>
            <person name="Lenhard B."/>
            <person name="Wells C."/>
            <person name="Kodzius R."/>
            <person name="Shimokawa K."/>
            <person name="Bajic V.B."/>
            <person name="Brenner S.E."/>
            <person name="Batalov S."/>
            <person name="Forrest A.R."/>
            <person name="Zavolan M."/>
            <person name="Davis M.J."/>
            <person name="Wilming L.G."/>
            <person name="Aidinis V."/>
            <person name="Allen J.E."/>
            <person name="Ambesi-Impiombato A."/>
            <person name="Apweiler R."/>
            <person name="Aturaliya R.N."/>
            <person name="Bailey T.L."/>
            <person name="Bansal M."/>
            <person name="Baxter L."/>
            <person name="Beisel K.W."/>
            <person name="Bersano T."/>
            <person name="Bono H."/>
            <person name="Chalk A.M."/>
            <person name="Chiu K.P."/>
            <person name="Choudhary V."/>
            <person name="Christoffels A."/>
            <person name="Clutterbuck D.R."/>
            <person name="Crowe M.L."/>
            <person name="Dalla E."/>
            <person name="Dalrymple B.P."/>
            <person name="de Bono B."/>
            <person name="Della Gatta G."/>
            <person name="di Bernardo D."/>
            <person name="Down T."/>
            <person name="Engstrom P."/>
            <person name="Fagiolini M."/>
            <person name="Faulkner G."/>
            <person name="Fletcher C.F."/>
            <person name="Fukushima T."/>
            <person name="Furuno M."/>
            <person name="Futaki S."/>
            <person name="Gariboldi M."/>
            <person name="Georgii-Hemming P."/>
            <person name="Gingeras T.R."/>
            <person name="Gojobori T."/>
            <person name="Green R.E."/>
            <person name="Gustincich S."/>
            <person name="Harbers M."/>
            <person name="Hayashi Y."/>
            <person name="Hensch T.K."/>
            <person name="Hirokawa N."/>
            <person name="Hill D."/>
            <person name="Huminiecki L."/>
            <person name="Iacono M."/>
            <person name="Ikeo K."/>
            <person name="Iwama A."/>
            <person name="Ishikawa T."/>
            <person name="Jakt M."/>
            <person name="Kanapin A."/>
            <person name="Katoh M."/>
            <person name="Kawasawa Y."/>
            <person name="Kelso J."/>
            <person name="Kitamura H."/>
            <person name="Kitano H."/>
            <person name="Kollias G."/>
            <person name="Krishnan S.P."/>
            <person name="Kruger A."/>
            <person name="Kummerfeld S.K."/>
            <person name="Kurochkin I.V."/>
            <person name="Lareau L.F."/>
            <person name="Lazarevic D."/>
            <person name="Lipovich L."/>
            <person name="Liu J."/>
            <person name="Liuni S."/>
            <person name="McWilliam S."/>
            <person name="Madan Babu M."/>
            <person name="Madera M."/>
            <person name="Marchionni L."/>
            <person name="Matsuda H."/>
            <person name="Matsuzawa S."/>
            <person name="Miki H."/>
            <person name="Mignone F."/>
            <person name="Miyake S."/>
            <person name="Morris K."/>
            <person name="Mottagui-Tabar S."/>
            <person name="Mulder N."/>
            <person name="Nakano N."/>
            <person name="Nakauchi H."/>
            <person name="Ng P."/>
            <person name="Nilsson R."/>
            <person name="Nishiguchi S."/>
            <person name="Nishikawa S."/>
            <person name="Nori F."/>
            <person name="Ohara O."/>
            <person name="Okazaki Y."/>
            <person name="Orlando V."/>
            <person name="Pang K.C."/>
            <person name="Pavan W.J."/>
            <person name="Pavesi G."/>
            <person name="Pesole G."/>
            <person name="Petrovsky N."/>
            <person name="Piazza S."/>
            <person name="Reed J."/>
            <person name="Reid J.F."/>
            <person name="Ring B.Z."/>
            <person name="Ringwald M."/>
            <person name="Rost B."/>
            <person name="Ruan Y."/>
            <person name="Salzberg S.L."/>
            <person name="Sandelin A."/>
            <person name="Schneider C."/>
            <person name="Schoenbach C."/>
            <person name="Sekiguchi K."/>
            <person name="Semple C.A."/>
            <person name="Seno S."/>
            <person name="Sessa L."/>
            <person name="Sheng Y."/>
            <person name="Shibata Y."/>
            <person name="Shimada H."/>
            <person name="Shimada K."/>
            <person name="Silva D."/>
            <person name="Sinclair B."/>
            <person name="Sperling S."/>
            <person name="Stupka E."/>
            <person name="Sugiura K."/>
            <person name="Sultana R."/>
            <person name="Takenaka Y."/>
            <person name="Taki K."/>
            <person name="Tammoja K."/>
            <person name="Tan S.L."/>
            <person name="Tang S."/>
            <person name="Taylor M.S."/>
            <person name="Tegner J."/>
            <person name="Teichmann S.A."/>
            <person name="Ueda H.R."/>
            <person name="van Nimwegen E."/>
            <person name="Verardo R."/>
            <person name="Wei C.L."/>
            <person name="Yagi K."/>
            <person name="Yamanishi H."/>
            <person name="Zabarovsky E."/>
            <person name="Zhu S."/>
            <person name="Zimmer A."/>
            <person name="Hide W."/>
            <person name="Bult C."/>
            <person name="Grimmond S.M."/>
            <person name="Teasdale R.D."/>
            <person name="Liu E.T."/>
            <person name="Brusic V."/>
            <person name="Quackenbush J."/>
            <person name="Wahlestedt C."/>
            <person name="Mattick J.S."/>
            <person name="Hume D.A."/>
            <person name="Kai C."/>
            <person name="Sasaki D."/>
            <person name="Tomaru Y."/>
            <person name="Fukuda S."/>
            <person name="Kanamori-Katayama M."/>
            <person name="Suzuki M."/>
            <person name="Aoki J."/>
            <person name="Arakawa T."/>
            <person name="Iida J."/>
            <person name="Imamura K."/>
            <person name="Itoh M."/>
            <person name="Kato T."/>
            <person name="Kawaji H."/>
            <person name="Kawagashira N."/>
            <person name="Kawashima T."/>
            <person name="Kojima M."/>
            <person name="Kondo S."/>
            <person name="Konno H."/>
            <person name="Nakano K."/>
            <person name="Ninomiya N."/>
            <person name="Nishio T."/>
            <person name="Okada M."/>
            <person name="Plessy C."/>
            <person name="Shibata K."/>
            <person name="Shiraki T."/>
            <person name="Suzuki S."/>
            <person name="Tagami M."/>
            <person name="Waki K."/>
            <person name="Watahiki A."/>
            <person name="Okamura-Oho Y."/>
            <person name="Suzuki H."/>
            <person name="Kawai J."/>
            <person name="Hayashizaki Y."/>
        </authorList>
    </citation>
    <scope>NUCLEOTIDE SEQUENCE [LARGE SCALE MRNA] OF 59-347</scope>
    <source>
        <strain>C57BL/6J</strain>
        <tissue>Placenta</tissue>
    </source>
</reference>
<reference key="3">
    <citation type="journal article" date="2010" name="Cell">
        <title>A tissue-specific atlas of mouse protein phosphorylation and expression.</title>
        <authorList>
            <person name="Huttlin E.L."/>
            <person name="Jedrychowski M.P."/>
            <person name="Elias J.E."/>
            <person name="Goswami T."/>
            <person name="Rad R."/>
            <person name="Beausoleil S.A."/>
            <person name="Villen J."/>
            <person name="Haas W."/>
            <person name="Sowa M.E."/>
            <person name="Gygi S.P."/>
        </authorList>
    </citation>
    <scope>PHOSPHORYLATION [LARGE SCALE ANALYSIS] AT SER-81</scope>
    <scope>IDENTIFICATION BY MASS SPECTROMETRY [LARGE SCALE ANALYSIS]</scope>
    <source>
        <tissue>Brain</tissue>
    </source>
</reference>
<reference key="4">
    <citation type="journal article" date="2011" name="Diabetes">
        <title>Fasting-induced protein phosphatase 1 regulatory subunit contributes to postprandial blood glucose homeostasis via regulation of hepatic glycogenesis.</title>
        <authorList>
            <person name="Luo X."/>
            <person name="Zhang Y."/>
            <person name="Ruan X."/>
            <person name="Jiang X."/>
            <person name="Zhu L."/>
            <person name="Wang X."/>
            <person name="Ding Q."/>
            <person name="Liu W."/>
            <person name="Pan Y."/>
            <person name="Wang Z."/>
            <person name="Chen Y."/>
        </authorList>
    </citation>
    <scope>FUNCTION</scope>
    <scope>INDUCTION</scope>
</reference>
<proteinExistence type="evidence at protein level"/>
<organism>
    <name type="scientific">Mus musculus</name>
    <name type="common">Mouse</name>
    <dbReference type="NCBI Taxonomy" id="10090"/>
    <lineage>
        <taxon>Eukaryota</taxon>
        <taxon>Metazoa</taxon>
        <taxon>Chordata</taxon>
        <taxon>Craniata</taxon>
        <taxon>Vertebrata</taxon>
        <taxon>Euteleostomi</taxon>
        <taxon>Mammalia</taxon>
        <taxon>Eutheria</taxon>
        <taxon>Euarchontoglires</taxon>
        <taxon>Glires</taxon>
        <taxon>Rodentia</taxon>
        <taxon>Myomorpha</taxon>
        <taxon>Muroidea</taxon>
        <taxon>Muridae</taxon>
        <taxon>Murinae</taxon>
        <taxon>Mus</taxon>
        <taxon>Mus</taxon>
    </lineage>
</organism>